<protein>
    <recommendedName>
        <fullName evidence="1">Large ribosomal subunit protein uL18</fullName>
    </recommendedName>
    <alternativeName>
        <fullName evidence="2">50S ribosomal protein L18</fullName>
    </alternativeName>
</protein>
<proteinExistence type="inferred from homology"/>
<evidence type="ECO:0000255" key="1">
    <source>
        <dbReference type="HAMAP-Rule" id="MF_01337"/>
    </source>
</evidence>
<evidence type="ECO:0000305" key="2"/>
<gene>
    <name evidence="1" type="primary">rplR</name>
    <name type="ordered locus">BH10350</name>
</gene>
<accession>Q6G2Y1</accession>
<reference key="1">
    <citation type="journal article" date="2004" name="Proc. Natl. Acad. Sci. U.S.A.">
        <title>The louse-borne human pathogen Bartonella quintana is a genomic derivative of the zoonotic agent Bartonella henselae.</title>
        <authorList>
            <person name="Alsmark U.C.M."/>
            <person name="Frank A.C."/>
            <person name="Karlberg E.O."/>
            <person name="Legault B.-A."/>
            <person name="Ardell D.H."/>
            <person name="Canbaeck B."/>
            <person name="Eriksson A.-S."/>
            <person name="Naeslund A.K."/>
            <person name="Handley S.A."/>
            <person name="Huvet M."/>
            <person name="La Scola B."/>
            <person name="Holmberg M."/>
            <person name="Andersson S.G.E."/>
        </authorList>
    </citation>
    <scope>NUCLEOTIDE SEQUENCE [LARGE SCALE GENOMIC DNA]</scope>
    <source>
        <strain>ATCC 49882 / DSM 28221 / CCUG 30454 / Houston 1</strain>
    </source>
</reference>
<keyword id="KW-0687">Ribonucleoprotein</keyword>
<keyword id="KW-0689">Ribosomal protein</keyword>
<keyword id="KW-0694">RNA-binding</keyword>
<keyword id="KW-0699">rRNA-binding</keyword>
<dbReference type="EMBL" id="BX897699">
    <property type="protein sequence ID" value="CAF27826.1"/>
    <property type="molecule type" value="Genomic_DNA"/>
</dbReference>
<dbReference type="RefSeq" id="WP_011180898.1">
    <property type="nucleotide sequence ID" value="NZ_LRIJ02000001.1"/>
</dbReference>
<dbReference type="SMR" id="Q6G2Y1"/>
<dbReference type="PaxDb" id="283166-BH10350"/>
<dbReference type="EnsemblBacteria" id="CAF27826">
    <property type="protein sequence ID" value="CAF27826"/>
    <property type="gene ID" value="BH10350"/>
</dbReference>
<dbReference type="GeneID" id="92985279"/>
<dbReference type="KEGG" id="bhe:BH10350"/>
<dbReference type="eggNOG" id="COG0256">
    <property type="taxonomic scope" value="Bacteria"/>
</dbReference>
<dbReference type="OrthoDB" id="9810939at2"/>
<dbReference type="Proteomes" id="UP000000421">
    <property type="component" value="Chromosome"/>
</dbReference>
<dbReference type="GO" id="GO:0022625">
    <property type="term" value="C:cytosolic large ribosomal subunit"/>
    <property type="evidence" value="ECO:0007669"/>
    <property type="project" value="TreeGrafter"/>
</dbReference>
<dbReference type="GO" id="GO:0008097">
    <property type="term" value="F:5S rRNA binding"/>
    <property type="evidence" value="ECO:0007669"/>
    <property type="project" value="TreeGrafter"/>
</dbReference>
<dbReference type="GO" id="GO:0003735">
    <property type="term" value="F:structural constituent of ribosome"/>
    <property type="evidence" value="ECO:0007669"/>
    <property type="project" value="InterPro"/>
</dbReference>
<dbReference type="GO" id="GO:0006412">
    <property type="term" value="P:translation"/>
    <property type="evidence" value="ECO:0007669"/>
    <property type="project" value="UniProtKB-UniRule"/>
</dbReference>
<dbReference type="CDD" id="cd00432">
    <property type="entry name" value="Ribosomal_L18_L5e"/>
    <property type="match status" value="1"/>
</dbReference>
<dbReference type="FunFam" id="3.30.420.100:FF:000001">
    <property type="entry name" value="50S ribosomal protein L18"/>
    <property type="match status" value="1"/>
</dbReference>
<dbReference type="Gene3D" id="3.30.420.100">
    <property type="match status" value="1"/>
</dbReference>
<dbReference type="HAMAP" id="MF_01337_B">
    <property type="entry name" value="Ribosomal_uL18_B"/>
    <property type="match status" value="1"/>
</dbReference>
<dbReference type="InterPro" id="IPR004389">
    <property type="entry name" value="Ribosomal_uL18_bac-type"/>
</dbReference>
<dbReference type="InterPro" id="IPR005484">
    <property type="entry name" value="Ribosomal_uL18_bac/euk"/>
</dbReference>
<dbReference type="NCBIfam" id="TIGR00060">
    <property type="entry name" value="L18_bact"/>
    <property type="match status" value="1"/>
</dbReference>
<dbReference type="PANTHER" id="PTHR12899">
    <property type="entry name" value="39S RIBOSOMAL PROTEIN L18, MITOCHONDRIAL"/>
    <property type="match status" value="1"/>
</dbReference>
<dbReference type="PANTHER" id="PTHR12899:SF3">
    <property type="entry name" value="LARGE RIBOSOMAL SUBUNIT PROTEIN UL18M"/>
    <property type="match status" value="1"/>
</dbReference>
<dbReference type="Pfam" id="PF00861">
    <property type="entry name" value="Ribosomal_L18p"/>
    <property type="match status" value="1"/>
</dbReference>
<dbReference type="SUPFAM" id="SSF53137">
    <property type="entry name" value="Translational machinery components"/>
    <property type="match status" value="1"/>
</dbReference>
<organism>
    <name type="scientific">Bartonella henselae (strain ATCC 49882 / DSM 28221 / CCUG 30454 / Houston 1)</name>
    <name type="common">Rochalimaea henselae</name>
    <dbReference type="NCBI Taxonomy" id="283166"/>
    <lineage>
        <taxon>Bacteria</taxon>
        <taxon>Pseudomonadati</taxon>
        <taxon>Pseudomonadota</taxon>
        <taxon>Alphaproteobacteria</taxon>
        <taxon>Hyphomicrobiales</taxon>
        <taxon>Bartonellaceae</taxon>
        <taxon>Bartonella</taxon>
    </lineage>
</organism>
<sequence length="120" mass="13312">MVSSKDIIQRRARRVRRRIKMVSGNRLRLSIYRSNQNIYAQIIDDLRGCTLVSASTLDGDLKKSLKSGSDKEAAFAVGKLIAERAKKAGVNEVVFDRGAYVYHGRVKALAEAAREGGLNF</sequence>
<feature type="chain" id="PRO_0000131218" description="Large ribosomal subunit protein uL18">
    <location>
        <begin position="1"/>
        <end position="120"/>
    </location>
</feature>
<name>RL18_BARHE</name>
<comment type="function">
    <text evidence="1">This is one of the proteins that bind and probably mediate the attachment of the 5S RNA into the large ribosomal subunit, where it forms part of the central protuberance.</text>
</comment>
<comment type="subunit">
    <text evidence="1">Part of the 50S ribosomal subunit; part of the 5S rRNA/L5/L18/L25 subcomplex. Contacts the 5S and 23S rRNAs.</text>
</comment>
<comment type="similarity">
    <text evidence="1">Belongs to the universal ribosomal protein uL18 family.</text>
</comment>